<protein>
    <recommendedName>
        <fullName evidence="1">Catalase-peroxidase 2</fullName>
        <shortName evidence="1">CP 2</shortName>
        <ecNumber evidence="1">1.11.1.21</ecNumber>
    </recommendedName>
    <alternativeName>
        <fullName evidence="1">Peroxidase/catalase 2</fullName>
    </alternativeName>
</protein>
<sequence>MQRNRIAKSVLAALAVIAMSAGSISARADGAPRANGFWWPETLDLSPLRQHDVESNPYGKDFDYAQAFQKLDIEAVKKDIRTTLTTSQDWWPADYGNYGPFFIRMAWHGAGTYRTYDGRGGAGGAQQRFEPLNSWPDNANLDKARRLLWPIKKKYGQNISWGDLMVLTGNVALESMGFQTFGFGGGREDDWQSDLVYWGAGPKFMSNNRDKNGKLEKPLAATQMGLIYVNPEGPNGNPDPVAAAQDIREAFGRMAMNDEETLALIAGGHTFGKAHGAASPDKCVGVAPAGAGVEAQGLGWANKCGTGKGVDTITSGLEGAWSVDPVHFTMQYLDNLLGHDWVLTKSPAGAHQWMPKDAQSIVPDAHDPSKLHPLMMFTTDIALKVDPAYSKIAKRFEEHPDEFKLAFAKAWFKLTHRDLGPKARYLGKDVPKVDLIWQDPLPVAGYQTIGAADIADLKSRILASGLPKSELIKTAWASAASFRGTDYRGGANGARIRLAPENGWAVNDPASVAKVLKSLEAIQSGFNKGRTDGKQVSLADLIVLGGSAAVEDAARKAGYDITVPFAPGRVDATQAQTDVASFAVLEPTADGFRNYYQKGNERSPAELLVDRASKLDLTVPEMTVLVGGLRALDANTGHSKLGVLTNHPGTLSNEFFVNLLDMSTEWKKSPSADGTYEGRDRKTGALRWTASPVDLVFGSSSELRAVAEVYASDDAHEKFVRDFVAAWTKVMNLDRFDLKRI</sequence>
<proteinExistence type="inferred from homology"/>
<feature type="signal peptide" evidence="1">
    <location>
        <begin position="1"/>
        <end position="28"/>
    </location>
</feature>
<feature type="chain" id="PRO_5000232530" description="Catalase-peroxidase 2">
    <location>
        <begin position="29"/>
        <end position="741"/>
    </location>
</feature>
<feature type="active site" description="Proton acceptor" evidence="1">
    <location>
        <position position="108"/>
    </location>
</feature>
<feature type="binding site" description="axial binding residue" evidence="1">
    <location>
        <position position="269"/>
    </location>
    <ligand>
        <name>heme b</name>
        <dbReference type="ChEBI" id="CHEBI:60344"/>
    </ligand>
    <ligandPart>
        <name>Fe</name>
        <dbReference type="ChEBI" id="CHEBI:18248"/>
    </ligandPart>
</feature>
<feature type="site" description="Transition state stabilizer" evidence="1">
    <location>
        <position position="104"/>
    </location>
</feature>
<feature type="cross-link" description="Tryptophyl-tyrosyl-methioninium (Trp-Tyr) (with M-254)" evidence="1">
    <location>
        <begin position="107"/>
        <end position="228"/>
    </location>
</feature>
<feature type="cross-link" description="Tryptophyl-tyrosyl-methioninium (Tyr-Met) (with W-107)" evidence="1">
    <location>
        <begin position="228"/>
        <end position="254"/>
    </location>
</feature>
<reference key="1">
    <citation type="submission" date="2007-03" db="EMBL/GenBank/DDBJ databases">
        <title>Complete sequence of chromosome 2 of Burkholderia vietnamiensis G4.</title>
        <authorList>
            <consortium name="US DOE Joint Genome Institute"/>
            <person name="Copeland A."/>
            <person name="Lucas S."/>
            <person name="Lapidus A."/>
            <person name="Barry K."/>
            <person name="Detter J.C."/>
            <person name="Glavina del Rio T."/>
            <person name="Hammon N."/>
            <person name="Israni S."/>
            <person name="Dalin E."/>
            <person name="Tice H."/>
            <person name="Pitluck S."/>
            <person name="Chain P."/>
            <person name="Malfatti S."/>
            <person name="Shin M."/>
            <person name="Vergez L."/>
            <person name="Schmutz J."/>
            <person name="Larimer F."/>
            <person name="Land M."/>
            <person name="Hauser L."/>
            <person name="Kyrpides N."/>
            <person name="Tiedje J."/>
            <person name="Richardson P."/>
        </authorList>
    </citation>
    <scope>NUCLEOTIDE SEQUENCE [LARGE SCALE GENOMIC DNA]</scope>
    <source>
        <strain>G4 / LMG 22486</strain>
    </source>
</reference>
<evidence type="ECO:0000255" key="1">
    <source>
        <dbReference type="HAMAP-Rule" id="MF_01961"/>
    </source>
</evidence>
<dbReference type="EC" id="1.11.1.21" evidence="1"/>
<dbReference type="EMBL" id="CP000615">
    <property type="protein sequence ID" value="ABO58163.1"/>
    <property type="molecule type" value="Genomic_DNA"/>
</dbReference>
<dbReference type="SMR" id="A4JPG0"/>
<dbReference type="PeroxiBase" id="2701">
    <property type="entry name" value="BviCP02"/>
</dbReference>
<dbReference type="KEGG" id="bvi:Bcep1808_5214"/>
<dbReference type="eggNOG" id="COG0376">
    <property type="taxonomic scope" value="Bacteria"/>
</dbReference>
<dbReference type="HOGENOM" id="CLU_025424_2_0_4"/>
<dbReference type="Proteomes" id="UP000002287">
    <property type="component" value="Chromosome 2"/>
</dbReference>
<dbReference type="GO" id="GO:0005829">
    <property type="term" value="C:cytosol"/>
    <property type="evidence" value="ECO:0007669"/>
    <property type="project" value="TreeGrafter"/>
</dbReference>
<dbReference type="GO" id="GO:0004096">
    <property type="term" value="F:catalase activity"/>
    <property type="evidence" value="ECO:0007669"/>
    <property type="project" value="UniProtKB-UniRule"/>
</dbReference>
<dbReference type="GO" id="GO:0020037">
    <property type="term" value="F:heme binding"/>
    <property type="evidence" value="ECO:0007669"/>
    <property type="project" value="InterPro"/>
</dbReference>
<dbReference type="GO" id="GO:0046872">
    <property type="term" value="F:metal ion binding"/>
    <property type="evidence" value="ECO:0007669"/>
    <property type="project" value="UniProtKB-KW"/>
</dbReference>
<dbReference type="GO" id="GO:0070301">
    <property type="term" value="P:cellular response to hydrogen peroxide"/>
    <property type="evidence" value="ECO:0007669"/>
    <property type="project" value="TreeGrafter"/>
</dbReference>
<dbReference type="GO" id="GO:0042744">
    <property type="term" value="P:hydrogen peroxide catabolic process"/>
    <property type="evidence" value="ECO:0007669"/>
    <property type="project" value="UniProtKB-KW"/>
</dbReference>
<dbReference type="CDD" id="cd08200">
    <property type="entry name" value="catalase_peroxidase_2"/>
    <property type="match status" value="1"/>
</dbReference>
<dbReference type="FunFam" id="1.10.420.10:FF:000004">
    <property type="entry name" value="Catalase-peroxidase"/>
    <property type="match status" value="1"/>
</dbReference>
<dbReference type="FunFam" id="1.10.520.10:FF:000002">
    <property type="entry name" value="Catalase-peroxidase"/>
    <property type="match status" value="1"/>
</dbReference>
<dbReference type="Gene3D" id="1.10.520.10">
    <property type="match status" value="2"/>
</dbReference>
<dbReference type="Gene3D" id="1.10.420.10">
    <property type="entry name" value="Peroxidase, domain 2"/>
    <property type="match status" value="2"/>
</dbReference>
<dbReference type="HAMAP" id="MF_01961">
    <property type="entry name" value="Catal_peroxid"/>
    <property type="match status" value="1"/>
</dbReference>
<dbReference type="InterPro" id="IPR000763">
    <property type="entry name" value="Catalase_peroxidase"/>
</dbReference>
<dbReference type="InterPro" id="IPR002016">
    <property type="entry name" value="Haem_peroxidase"/>
</dbReference>
<dbReference type="InterPro" id="IPR010255">
    <property type="entry name" value="Haem_peroxidase_sf"/>
</dbReference>
<dbReference type="InterPro" id="IPR019794">
    <property type="entry name" value="Peroxidases_AS"/>
</dbReference>
<dbReference type="InterPro" id="IPR019793">
    <property type="entry name" value="Peroxidases_heam-ligand_BS"/>
</dbReference>
<dbReference type="NCBIfam" id="TIGR00198">
    <property type="entry name" value="cat_per_HPI"/>
    <property type="match status" value="1"/>
</dbReference>
<dbReference type="NCBIfam" id="NF011635">
    <property type="entry name" value="PRK15061.1"/>
    <property type="match status" value="1"/>
</dbReference>
<dbReference type="PANTHER" id="PTHR30555:SF0">
    <property type="entry name" value="CATALASE-PEROXIDASE"/>
    <property type="match status" value="1"/>
</dbReference>
<dbReference type="PANTHER" id="PTHR30555">
    <property type="entry name" value="HYDROPEROXIDASE I, BIFUNCTIONAL CATALASE-PEROXIDASE"/>
    <property type="match status" value="1"/>
</dbReference>
<dbReference type="Pfam" id="PF00141">
    <property type="entry name" value="peroxidase"/>
    <property type="match status" value="2"/>
</dbReference>
<dbReference type="PRINTS" id="PR00460">
    <property type="entry name" value="BPEROXIDASE"/>
</dbReference>
<dbReference type="PRINTS" id="PR00458">
    <property type="entry name" value="PEROXIDASE"/>
</dbReference>
<dbReference type="SUPFAM" id="SSF48113">
    <property type="entry name" value="Heme-dependent peroxidases"/>
    <property type="match status" value="2"/>
</dbReference>
<dbReference type="PROSITE" id="PS00435">
    <property type="entry name" value="PEROXIDASE_1"/>
    <property type="match status" value="1"/>
</dbReference>
<dbReference type="PROSITE" id="PS00436">
    <property type="entry name" value="PEROXIDASE_2"/>
    <property type="match status" value="1"/>
</dbReference>
<dbReference type="PROSITE" id="PS50873">
    <property type="entry name" value="PEROXIDASE_4"/>
    <property type="match status" value="1"/>
</dbReference>
<gene>
    <name evidence="1" type="primary">katG2</name>
    <name type="ordered locus">Bcep1808_5214</name>
</gene>
<organism>
    <name type="scientific">Burkholderia vietnamiensis (strain G4 / LMG 22486)</name>
    <name type="common">Burkholderia cepacia (strain R1808)</name>
    <dbReference type="NCBI Taxonomy" id="269482"/>
    <lineage>
        <taxon>Bacteria</taxon>
        <taxon>Pseudomonadati</taxon>
        <taxon>Pseudomonadota</taxon>
        <taxon>Betaproteobacteria</taxon>
        <taxon>Burkholderiales</taxon>
        <taxon>Burkholderiaceae</taxon>
        <taxon>Burkholderia</taxon>
        <taxon>Burkholderia cepacia complex</taxon>
    </lineage>
</organism>
<accession>A4JPG0</accession>
<keyword id="KW-0349">Heme</keyword>
<keyword id="KW-0376">Hydrogen peroxide</keyword>
<keyword id="KW-0408">Iron</keyword>
<keyword id="KW-0479">Metal-binding</keyword>
<keyword id="KW-0560">Oxidoreductase</keyword>
<keyword id="KW-0575">Peroxidase</keyword>
<keyword id="KW-0732">Signal</keyword>
<comment type="function">
    <text evidence="1">Bifunctional enzyme with both catalase and broad-spectrum peroxidase activity.</text>
</comment>
<comment type="catalytic activity">
    <reaction evidence="1">
        <text>H2O2 + AH2 = A + 2 H2O</text>
        <dbReference type="Rhea" id="RHEA:30275"/>
        <dbReference type="ChEBI" id="CHEBI:13193"/>
        <dbReference type="ChEBI" id="CHEBI:15377"/>
        <dbReference type="ChEBI" id="CHEBI:16240"/>
        <dbReference type="ChEBI" id="CHEBI:17499"/>
        <dbReference type="EC" id="1.11.1.21"/>
    </reaction>
</comment>
<comment type="catalytic activity">
    <reaction evidence="1">
        <text>2 H2O2 = O2 + 2 H2O</text>
        <dbReference type="Rhea" id="RHEA:20309"/>
        <dbReference type="ChEBI" id="CHEBI:15377"/>
        <dbReference type="ChEBI" id="CHEBI:15379"/>
        <dbReference type="ChEBI" id="CHEBI:16240"/>
        <dbReference type="EC" id="1.11.1.21"/>
    </reaction>
</comment>
<comment type="cofactor">
    <cofactor evidence="1">
        <name>heme b</name>
        <dbReference type="ChEBI" id="CHEBI:60344"/>
    </cofactor>
    <text evidence="1">Binds 1 heme b (iron(II)-protoporphyrin IX) group per dimer.</text>
</comment>
<comment type="subunit">
    <text evidence="1">Homodimer or homotetramer.</text>
</comment>
<comment type="PTM">
    <text evidence="1">Formation of the three residue Trp-Tyr-Met cross-link is important for the catalase, but not the peroxidase activity of the enzyme.</text>
</comment>
<comment type="similarity">
    <text evidence="1">Belongs to the peroxidase family. Peroxidase/catalase subfamily.</text>
</comment>
<name>KATG2_BURVG</name>